<feature type="chain" id="PRO_0000214814" description="Sodium- and chloride-dependent transporter XTRP3">
    <location>
        <begin position="1"/>
        <end position="616"/>
    </location>
</feature>
<feature type="topological domain" description="Cytoplasmic" evidence="2">
    <location>
        <begin position="1"/>
        <end position="37"/>
    </location>
</feature>
<feature type="transmembrane region" description="Helical; Name=1" evidence="2">
    <location>
        <begin position="38"/>
        <end position="58"/>
    </location>
</feature>
<feature type="topological domain" description="Extracellular" evidence="2">
    <location>
        <begin position="59"/>
        <end position="66"/>
    </location>
</feature>
<feature type="transmembrane region" description="Helical; Name=2" evidence="2">
    <location>
        <begin position="67"/>
        <end position="87"/>
    </location>
</feature>
<feature type="topological domain" description="Cytoplasmic" evidence="2">
    <location>
        <begin position="88"/>
        <end position="103"/>
    </location>
</feature>
<feature type="transmembrane region" description="Helical; Name=3" evidence="2">
    <location>
        <begin position="104"/>
        <end position="124"/>
    </location>
</feature>
<feature type="topological domain" description="Extracellular" evidence="2">
    <location>
        <begin position="125"/>
        <end position="189"/>
    </location>
</feature>
<feature type="transmembrane region" description="Helical; Name=4" evidence="2">
    <location>
        <begin position="190"/>
        <end position="210"/>
    </location>
</feature>
<feature type="topological domain" description="Cytoplasmic" evidence="2">
    <location>
        <begin position="211"/>
        <end position="218"/>
    </location>
</feature>
<feature type="transmembrane region" description="Helical; Name=5" evidence="2">
    <location>
        <begin position="219"/>
        <end position="239"/>
    </location>
</feature>
<feature type="topological domain" description="Extracellular" evidence="2">
    <location>
        <begin position="240"/>
        <end position="265"/>
    </location>
</feature>
<feature type="transmembrane region" description="Helical; Name=6" evidence="2">
    <location>
        <begin position="266"/>
        <end position="286"/>
    </location>
</feature>
<feature type="topological domain" description="Cytoplasmic" evidence="2">
    <location>
        <begin position="287"/>
        <end position="300"/>
    </location>
</feature>
<feature type="transmembrane region" description="Helical; Name=7" evidence="2">
    <location>
        <begin position="301"/>
        <end position="321"/>
    </location>
</feature>
<feature type="topological domain" description="Extracellular" evidence="2">
    <location>
        <begin position="322"/>
        <end position="413"/>
    </location>
</feature>
<feature type="transmembrane region" description="Helical; Name=8" evidence="2">
    <location>
        <begin position="414"/>
        <end position="434"/>
    </location>
</feature>
<feature type="topological domain" description="Cytoplasmic" evidence="2">
    <location>
        <begin position="435"/>
        <end position="455"/>
    </location>
</feature>
<feature type="transmembrane region" description="Helical; Name=9" evidence="2">
    <location>
        <begin position="456"/>
        <end position="476"/>
    </location>
</feature>
<feature type="topological domain" description="Extracellular" evidence="2">
    <location>
        <begin position="477"/>
        <end position="489"/>
    </location>
</feature>
<feature type="transmembrane region" description="Helical; Name=10" evidence="2">
    <location>
        <begin position="490"/>
        <end position="510"/>
    </location>
</feature>
<feature type="topological domain" description="Cytoplasmic" evidence="2">
    <location>
        <begin position="511"/>
        <end position="533"/>
    </location>
</feature>
<feature type="transmembrane region" description="Helical; Name=11" evidence="2">
    <location>
        <begin position="534"/>
        <end position="554"/>
    </location>
</feature>
<feature type="topological domain" description="Extracellular" evidence="2">
    <location>
        <begin position="555"/>
        <end position="578"/>
    </location>
</feature>
<feature type="transmembrane region" description="Helical; Name=12" evidence="2">
    <location>
        <begin position="579"/>
        <end position="599"/>
    </location>
</feature>
<feature type="topological domain" description="Cytoplasmic" evidence="2">
    <location>
        <begin position="600"/>
        <end position="616"/>
    </location>
</feature>
<feature type="region of interest" description="Disordered" evidence="3">
    <location>
        <begin position="1"/>
        <end position="26"/>
    </location>
</feature>
<feature type="compositionally biased region" description="Basic residues" evidence="3">
    <location>
        <begin position="1"/>
        <end position="11"/>
    </location>
</feature>
<feature type="compositionally biased region" description="Basic and acidic residues" evidence="3">
    <location>
        <begin position="16"/>
        <end position="26"/>
    </location>
</feature>
<feature type="glycosylation site" description="N-linked (GlcNAc...) asparagine" evidence="2">
    <location>
        <position position="155"/>
    </location>
</feature>
<feature type="glycosylation site" description="N-linked (GlcNAc...) asparagine" evidence="2">
    <location>
        <position position="381"/>
    </location>
</feature>
<reference key="1">
    <citation type="journal article" date="1995" name="FEBS Lett.">
        <title>Molecular cloning of an orphan transporter. A new member of the neurotransmitter transporter family.</title>
        <authorList>
            <person name="Smith K.E."/>
            <person name="Fried S.G."/>
            <person name="Durkin M.M."/>
            <person name="Gustafson E.L."/>
            <person name="Borden L.A."/>
            <person name="Branchek T.A."/>
            <person name="Weinshank R.L."/>
        </authorList>
    </citation>
    <scope>NUCLEOTIDE SEQUENCE [MRNA]</scope>
    <source>
        <tissue>Brain</tissue>
    </source>
</reference>
<reference key="2">
    <citation type="journal article" date="2005" name="J. Biol. Chem.">
        <title>Identification of mammalian proline transporter SIT1 (SLC6A20) with characteristics of classical system imino.</title>
        <authorList>
            <person name="Takanaga H."/>
            <person name="Mackenzie B."/>
            <person name="Suzuki Y."/>
            <person name="Hediger M.A."/>
        </authorList>
    </citation>
    <scope>FUNCTION</scope>
    <scope>TISSUE SPECIFICITY</scope>
</reference>
<comment type="function">
    <text evidence="1 4">Mediates the Na(+)- and Cl(-)-dependent uptake of imino acids such as L-proline, N-methyl-L-proline and pipecolate as well as N-methylated amino acids (PubMed:15632147). Also transports glycine, regulates proline and glycine homeostasis in the brain playing a role in the modulation of NMDAR currents (By similarity).</text>
</comment>
<comment type="catalytic activity">
    <reaction evidence="1">
        <text>L-proline(out) + chloride(out) + 2 Na(+)(out) = L-proline(in) + chloride(in) + 2 Na(+)(in)</text>
        <dbReference type="Rhea" id="RHEA:71263"/>
        <dbReference type="ChEBI" id="CHEBI:17996"/>
        <dbReference type="ChEBI" id="CHEBI:29101"/>
        <dbReference type="ChEBI" id="CHEBI:60039"/>
    </reaction>
</comment>
<comment type="catalytic activity">
    <reaction evidence="1">
        <text>4-hydroxy-L-proline(out) + chloride(out) + 2 Na(+)(out) = 4-hydroxy-L-proline(in) + chloride(in) + 2 Na(+)(in)</text>
        <dbReference type="Rhea" id="RHEA:72223"/>
        <dbReference type="ChEBI" id="CHEBI:17996"/>
        <dbReference type="ChEBI" id="CHEBI:29101"/>
        <dbReference type="ChEBI" id="CHEBI:58419"/>
    </reaction>
</comment>
<comment type="catalytic activity">
    <reaction evidence="1">
        <text>2-methyl-2-(methylamino)propanoate(out) + chloride(out) + 2 Na(+)(out) = 2-methyl-2-(methylamino)propanoate(in) + chloride(in) + 2 Na(+)(in)</text>
        <dbReference type="Rhea" id="RHEA:72235"/>
        <dbReference type="ChEBI" id="CHEBI:17996"/>
        <dbReference type="ChEBI" id="CHEBI:29101"/>
        <dbReference type="ChEBI" id="CHEBI:192077"/>
    </reaction>
</comment>
<comment type="catalytic activity">
    <reaction evidence="1">
        <text>L-pipecolate(out) + chloride(out) + 2 Na(+)(out) = L-pipecolate(in) + chloride(in) + 2 Na(+)(in)</text>
        <dbReference type="Rhea" id="RHEA:71267"/>
        <dbReference type="ChEBI" id="CHEBI:17996"/>
        <dbReference type="ChEBI" id="CHEBI:29101"/>
        <dbReference type="ChEBI" id="CHEBI:61185"/>
    </reaction>
</comment>
<comment type="catalytic activity">
    <reaction evidence="1">
        <text>glycine betaine(out) + chloride(out) + 2 Na(+)(out) = glycine betaine(in) + chloride(in) + 2 Na(+)(in)</text>
        <dbReference type="Rhea" id="RHEA:70735"/>
        <dbReference type="ChEBI" id="CHEBI:17750"/>
        <dbReference type="ChEBI" id="CHEBI:17996"/>
        <dbReference type="ChEBI" id="CHEBI:29101"/>
    </reaction>
</comment>
<comment type="catalytic activity">
    <reaction evidence="1">
        <text>glycine(out) + chloride(out) + 2 Na(+)(out) = glycine(in) + chloride(in) + 2 Na(+)(in)</text>
        <dbReference type="Rhea" id="RHEA:70691"/>
        <dbReference type="ChEBI" id="CHEBI:17996"/>
        <dbReference type="ChEBI" id="CHEBI:29101"/>
        <dbReference type="ChEBI" id="CHEBI:57305"/>
    </reaction>
</comment>
<comment type="subcellular location">
    <subcellularLocation>
        <location evidence="1">Apical cell membrane</location>
        <topology evidence="1">Multi-pass membrane protein</topology>
    </subcellularLocation>
    <text evidence="1">Located in the apical brush border membrane of kidney proximal tubule cells and in the apical membrane of enterocytes lining the intestinal villi.</text>
</comment>
<comment type="tissue specificity">
    <text evidence="4">Highly expressed in epithelial cells of duodenum, jejunum, ileum, stomach, cecum, colon and kidney proximal tubule. Also expressed in the choroid plexus, microglia and meniges of the brain and in the ovary.</text>
</comment>
<comment type="similarity">
    <text evidence="5">Belongs to the sodium:neurotransmitter symporter (SNF) (TC 2.A.22) family. SLC6A20 subfamily.</text>
</comment>
<organism>
    <name type="scientific">Rattus norvegicus</name>
    <name type="common">Rat</name>
    <dbReference type="NCBI Taxonomy" id="10116"/>
    <lineage>
        <taxon>Eukaryota</taxon>
        <taxon>Metazoa</taxon>
        <taxon>Chordata</taxon>
        <taxon>Craniata</taxon>
        <taxon>Vertebrata</taxon>
        <taxon>Euteleostomi</taxon>
        <taxon>Mammalia</taxon>
        <taxon>Eutheria</taxon>
        <taxon>Euarchontoglires</taxon>
        <taxon>Glires</taxon>
        <taxon>Rodentia</taxon>
        <taxon>Myomorpha</taxon>
        <taxon>Muroidea</taxon>
        <taxon>Muridae</taxon>
        <taxon>Murinae</taxon>
        <taxon>Rattus</taxon>
    </lineage>
</organism>
<dbReference type="EMBL" id="S76742">
    <property type="protein sequence ID" value="AAB32806.1"/>
    <property type="molecule type" value="mRNA"/>
</dbReference>
<dbReference type="PIR" id="S50998">
    <property type="entry name" value="S50998"/>
</dbReference>
<dbReference type="RefSeq" id="NP_579830.1">
    <property type="nucleotide sequence ID" value="NM_133296.1"/>
</dbReference>
<dbReference type="SMR" id="Q64093"/>
<dbReference type="FunCoup" id="Q64093">
    <property type="interactions" value="6"/>
</dbReference>
<dbReference type="STRING" id="10116.ENSRNOP00000008172"/>
<dbReference type="TCDB" id="2.A.22.6.1">
    <property type="family name" value="the neurotransmitter:sodium symporter (nss) family"/>
</dbReference>
<dbReference type="GlyCosmos" id="Q64093">
    <property type="glycosylation" value="2 sites, No reported glycans"/>
</dbReference>
<dbReference type="GlyGen" id="Q64093">
    <property type="glycosylation" value="2 sites"/>
</dbReference>
<dbReference type="PhosphoSitePlus" id="Q64093"/>
<dbReference type="PaxDb" id="10116-ENSRNOP00000007467"/>
<dbReference type="GeneID" id="113918"/>
<dbReference type="KEGG" id="rno:113918"/>
<dbReference type="UCSC" id="RGD:621651">
    <property type="organism name" value="rat"/>
</dbReference>
<dbReference type="AGR" id="RGD:1566368"/>
<dbReference type="AGR" id="RGD:621651"/>
<dbReference type="CTD" id="102680"/>
<dbReference type="RGD" id="621651">
    <property type="gene designation" value="Slc6a20"/>
</dbReference>
<dbReference type="eggNOG" id="KOG3659">
    <property type="taxonomic scope" value="Eukaryota"/>
</dbReference>
<dbReference type="InParanoid" id="Q64093"/>
<dbReference type="OrthoDB" id="6581954at2759"/>
<dbReference type="PhylomeDB" id="Q64093"/>
<dbReference type="Reactome" id="R-RNO-352230">
    <property type="pathway name" value="Amino acid transport across the plasma membrane"/>
</dbReference>
<dbReference type="Reactome" id="R-RNO-442660">
    <property type="pathway name" value="Na+/Cl- dependent neurotransmitter transporters"/>
</dbReference>
<dbReference type="PRO" id="PR:Q64093"/>
<dbReference type="Proteomes" id="UP000002494">
    <property type="component" value="Unplaced"/>
</dbReference>
<dbReference type="GO" id="GO:0016324">
    <property type="term" value="C:apical plasma membrane"/>
    <property type="evidence" value="ECO:0000250"/>
    <property type="project" value="UniProtKB"/>
</dbReference>
<dbReference type="GO" id="GO:0031526">
    <property type="term" value="C:brush border membrane"/>
    <property type="evidence" value="ECO:0000266"/>
    <property type="project" value="RGD"/>
</dbReference>
<dbReference type="GO" id="GO:0005886">
    <property type="term" value="C:plasma membrane"/>
    <property type="evidence" value="ECO:0000266"/>
    <property type="project" value="RGD"/>
</dbReference>
<dbReference type="GO" id="GO:0015171">
    <property type="term" value="F:amino acid transmembrane transporter activity"/>
    <property type="evidence" value="ECO:0000314"/>
    <property type="project" value="UniProtKB"/>
</dbReference>
<dbReference type="GO" id="GO:0015199">
    <property type="term" value="F:amino-acid betaine transmembrane transporter activity"/>
    <property type="evidence" value="ECO:0000315"/>
    <property type="project" value="ARUK-UCL"/>
</dbReference>
<dbReference type="GO" id="GO:0015193">
    <property type="term" value="F:L-proline transmembrane transporter activity"/>
    <property type="evidence" value="ECO:0000314"/>
    <property type="project" value="ARUK-UCL"/>
</dbReference>
<dbReference type="GO" id="GO:0015175">
    <property type="term" value="F:neutral L-amino acid transmembrane transporter activity"/>
    <property type="evidence" value="ECO:0000266"/>
    <property type="project" value="RGD"/>
</dbReference>
<dbReference type="GO" id="GO:0005298">
    <property type="term" value="F:proline:sodium symporter activity"/>
    <property type="evidence" value="ECO:0000314"/>
    <property type="project" value="ARUK-UCL"/>
</dbReference>
<dbReference type="GO" id="GO:0015370">
    <property type="term" value="F:solute:sodium symporter activity"/>
    <property type="evidence" value="ECO:0000250"/>
    <property type="project" value="UniProtKB"/>
</dbReference>
<dbReference type="GO" id="GO:0089718">
    <property type="term" value="P:amino acid import across plasma membrane"/>
    <property type="evidence" value="ECO:0000314"/>
    <property type="project" value="ARUK-UCL"/>
</dbReference>
<dbReference type="GO" id="GO:0006865">
    <property type="term" value="P:amino acid transport"/>
    <property type="evidence" value="ECO:0000314"/>
    <property type="project" value="UniProtKB"/>
</dbReference>
<dbReference type="GO" id="GO:0015838">
    <property type="term" value="P:amino-acid betaine transport"/>
    <property type="evidence" value="ECO:0000315"/>
    <property type="project" value="ARUK-UCL"/>
</dbReference>
<dbReference type="GO" id="GO:1903804">
    <property type="term" value="P:glycine import across plasma membrane"/>
    <property type="evidence" value="ECO:0000250"/>
    <property type="project" value="UniProtKB"/>
</dbReference>
<dbReference type="GO" id="GO:0015816">
    <property type="term" value="P:glycine transport"/>
    <property type="evidence" value="ECO:0000266"/>
    <property type="project" value="RGD"/>
</dbReference>
<dbReference type="GO" id="GO:1904271">
    <property type="term" value="P:L-proline import across plasma membrane"/>
    <property type="evidence" value="ECO:0000314"/>
    <property type="project" value="ARUK-UCL"/>
</dbReference>
<dbReference type="GO" id="GO:1905647">
    <property type="term" value="P:proline import across plasma membrane"/>
    <property type="evidence" value="ECO:0000266"/>
    <property type="project" value="RGD"/>
</dbReference>
<dbReference type="GO" id="GO:0015824">
    <property type="term" value="P:proline transport"/>
    <property type="evidence" value="ECO:0000266"/>
    <property type="project" value="RGD"/>
</dbReference>
<dbReference type="GO" id="GO:0035725">
    <property type="term" value="P:sodium ion transmembrane transport"/>
    <property type="evidence" value="ECO:0000318"/>
    <property type="project" value="GO_Central"/>
</dbReference>
<dbReference type="InterPro" id="IPR000175">
    <property type="entry name" value="Na/ntran_symport"/>
</dbReference>
<dbReference type="InterPro" id="IPR002438">
    <property type="entry name" value="Neutral_aa_SLC6"/>
</dbReference>
<dbReference type="InterPro" id="IPR037272">
    <property type="entry name" value="SNS_sf"/>
</dbReference>
<dbReference type="PANTHER" id="PTHR11616:SF44">
    <property type="entry name" value="SODIUM- AND CHLORIDE-DEPENDENT TRANSPORTER XTRP3"/>
    <property type="match status" value="1"/>
</dbReference>
<dbReference type="PANTHER" id="PTHR11616">
    <property type="entry name" value="SODIUM/CHLORIDE DEPENDENT TRANSPORTER"/>
    <property type="match status" value="1"/>
</dbReference>
<dbReference type="Pfam" id="PF00209">
    <property type="entry name" value="SNF"/>
    <property type="match status" value="1"/>
</dbReference>
<dbReference type="PRINTS" id="PR00176">
    <property type="entry name" value="NANEUSMPORT"/>
</dbReference>
<dbReference type="PRINTS" id="PR01206">
    <property type="entry name" value="ORPHTRNSPORT"/>
</dbReference>
<dbReference type="SUPFAM" id="SSF161070">
    <property type="entry name" value="SNF-like"/>
    <property type="match status" value="1"/>
</dbReference>
<dbReference type="PROSITE" id="PS00610">
    <property type="entry name" value="NA_NEUROTRAN_SYMP_1"/>
    <property type="match status" value="1"/>
</dbReference>
<dbReference type="PROSITE" id="PS00754">
    <property type="entry name" value="NA_NEUROTRAN_SYMP_2"/>
    <property type="match status" value="1"/>
</dbReference>
<dbReference type="PROSITE" id="PS50267">
    <property type="entry name" value="NA_NEUROTRAN_SYMP_3"/>
    <property type="match status" value="1"/>
</dbReference>
<name>S6A20_RAT</name>
<gene>
    <name evidence="6" type="primary">Slc6a20</name>
    <name type="synonym">Sit1</name>
    <name type="synonym">Xtrp3</name>
</gene>
<accession>Q64093</accession>
<sequence length="616" mass="68971">MRLAIKRRASRGQRPGPDEKRARDMEKARPQWGNPLQFVFACISYAVGLGNVWRFPYLCQMYGGGSFLVPYLIMLIVEGMPLLYLELAVGQRMRQGSIGAWRTISPYLSGVGVASVVVSFFLSMYYNVINAWGFWYLFHSFQDPLPWSVCPLNSNRTGYDEECEKASSTQYFWYRKTLNISPSIQENGGVQWEPALCLTLAWLMVYLCILRGTESTGKVVYFTALMPYCVLIIYLVRGLTLHGATNGLMYMFTPKIEQLANPKAWINAATQIFFSLGLGFGSLIAFASYNEPSNDCQKHAVIVSVINSSTSIFASIVTFSIYGFKATFNYENCLNKVILLLTNSFDLEDGFLTASNLEEVKDYLASTYPNKYSEVFPHIRNCSLESELNTAVQGTGLAFIVYAEAIKNMEVSQLWSVLYFFMLLMLGMGSMLGNTAAILTPLTDSKVISSYLPKEAISGLVCLINCAVGMVFTMEAGNYWFDIFNDYAATLSLLLIVLVETIAVCYVYGLRRFESDLRAMTGRPLNWYWKAMWAFVSPLLIIGLFIFYLSDYILTGTLQYQAWDATQGQLVTKDYPPHALAVIGLLVASSTMCIPLVALGTFIRNRLKRGGSSPVA</sequence>
<keyword id="KW-0029">Amino-acid transport</keyword>
<keyword id="KW-1003">Cell membrane</keyword>
<keyword id="KW-0325">Glycoprotein</keyword>
<keyword id="KW-0472">Membrane</keyword>
<keyword id="KW-1185">Reference proteome</keyword>
<keyword id="KW-0769">Symport</keyword>
<keyword id="KW-0812">Transmembrane</keyword>
<keyword id="KW-1133">Transmembrane helix</keyword>
<keyword id="KW-0813">Transport</keyword>
<protein>
    <recommendedName>
        <fullName evidence="5">Sodium- and chloride-dependent transporter XTRP3</fullName>
    </recommendedName>
    <alternativeName>
        <fullName>Sodium/imino-acid transporter 1</fullName>
    </alternativeName>
    <alternativeName>
        <fullName>Solute carrier family 6 member 20</fullName>
    </alternativeName>
    <alternativeName>
        <fullName>Transporter rB21A</fullName>
    </alternativeName>
</protein>
<evidence type="ECO:0000250" key="1">
    <source>
        <dbReference type="UniProtKB" id="Q8VDB9"/>
    </source>
</evidence>
<evidence type="ECO:0000255" key="2"/>
<evidence type="ECO:0000256" key="3">
    <source>
        <dbReference type="SAM" id="MobiDB-lite"/>
    </source>
</evidence>
<evidence type="ECO:0000269" key="4">
    <source>
    </source>
</evidence>
<evidence type="ECO:0000305" key="5"/>
<evidence type="ECO:0000312" key="6">
    <source>
        <dbReference type="RGD" id="621651"/>
    </source>
</evidence>
<proteinExistence type="evidence at transcript level"/>